<keyword id="KW-0066">ATP synthesis</keyword>
<keyword id="KW-1003">Cell membrane</keyword>
<keyword id="KW-0138">CF(0)</keyword>
<keyword id="KW-0375">Hydrogen ion transport</keyword>
<keyword id="KW-0406">Ion transport</keyword>
<keyword id="KW-0472">Membrane</keyword>
<keyword id="KW-1185">Reference proteome</keyword>
<keyword id="KW-0812">Transmembrane</keyword>
<keyword id="KW-1133">Transmembrane helix</keyword>
<keyword id="KW-0813">Transport</keyword>
<comment type="function">
    <text evidence="1">F(1)F(0) ATP synthase produces ATP from ADP in the presence of a proton or sodium gradient. F-type ATPases consist of two structural domains, F(1) containing the extramembraneous catalytic core and F(0) containing the membrane proton channel, linked together by a central stalk and a peripheral stalk. During catalysis, ATP synthesis in the catalytic domain of F(1) is coupled via a rotary mechanism of the central stalk subunits to proton translocation.</text>
</comment>
<comment type="function">
    <text evidence="1">Component of the F(0) channel, it forms part of the peripheral stalk, linking F(1) to F(0).</text>
</comment>
<comment type="subunit">
    <text evidence="1">F-type ATPases have 2 components, F(1) - the catalytic core - and F(0) - the membrane proton channel. F(1) has five subunits: alpha(3), beta(3), gamma(1), delta(1), epsilon(1). F(0) has three main subunits: a(1), b(2) and c(10-14). The alpha and beta chains form an alternating ring which encloses part of the gamma chain. F(1) is attached to F(0) by a central stalk formed by the gamma and epsilon chains, while a peripheral stalk is formed by the delta and b chains.</text>
</comment>
<comment type="subcellular location">
    <subcellularLocation>
        <location evidence="1">Cell membrane</location>
        <topology evidence="1">Single-pass membrane protein</topology>
    </subcellularLocation>
</comment>
<comment type="similarity">
    <text evidence="1">Belongs to the ATPase B chain family.</text>
</comment>
<dbReference type="EMBL" id="AE014184">
    <property type="protein sequence ID" value="AAO44525.1"/>
    <property type="molecule type" value="Genomic_DNA"/>
</dbReference>
<dbReference type="RefSeq" id="WP_011096292.1">
    <property type="nucleotide sequence ID" value="NC_004572.3"/>
</dbReference>
<dbReference type="SMR" id="Q83G87"/>
<dbReference type="STRING" id="203267.TWT_428"/>
<dbReference type="KEGG" id="twh:TWT_428"/>
<dbReference type="eggNOG" id="COG0711">
    <property type="taxonomic scope" value="Bacteria"/>
</dbReference>
<dbReference type="HOGENOM" id="CLU_079215_5_1_11"/>
<dbReference type="OrthoDB" id="5243563at2"/>
<dbReference type="Proteomes" id="UP000002200">
    <property type="component" value="Chromosome"/>
</dbReference>
<dbReference type="GO" id="GO:0005886">
    <property type="term" value="C:plasma membrane"/>
    <property type="evidence" value="ECO:0007669"/>
    <property type="project" value="UniProtKB-SubCell"/>
</dbReference>
<dbReference type="GO" id="GO:0045259">
    <property type="term" value="C:proton-transporting ATP synthase complex"/>
    <property type="evidence" value="ECO:0007669"/>
    <property type="project" value="UniProtKB-KW"/>
</dbReference>
<dbReference type="GO" id="GO:0046933">
    <property type="term" value="F:proton-transporting ATP synthase activity, rotational mechanism"/>
    <property type="evidence" value="ECO:0007669"/>
    <property type="project" value="UniProtKB-UniRule"/>
</dbReference>
<dbReference type="GO" id="GO:0046961">
    <property type="term" value="F:proton-transporting ATPase activity, rotational mechanism"/>
    <property type="evidence" value="ECO:0007669"/>
    <property type="project" value="TreeGrafter"/>
</dbReference>
<dbReference type="CDD" id="cd06503">
    <property type="entry name" value="ATP-synt_Fo_b"/>
    <property type="match status" value="1"/>
</dbReference>
<dbReference type="Gene3D" id="1.20.5.620">
    <property type="entry name" value="F1F0 ATP synthase subunit B, membrane domain"/>
    <property type="match status" value="1"/>
</dbReference>
<dbReference type="HAMAP" id="MF_01398">
    <property type="entry name" value="ATP_synth_b_bprime"/>
    <property type="match status" value="1"/>
</dbReference>
<dbReference type="InterPro" id="IPR028987">
    <property type="entry name" value="ATP_synth_B-like_membr_sf"/>
</dbReference>
<dbReference type="InterPro" id="IPR002146">
    <property type="entry name" value="ATP_synth_b/b'su_bac/chlpt"/>
</dbReference>
<dbReference type="InterPro" id="IPR005864">
    <property type="entry name" value="ATP_synth_F0_bsu_bac"/>
</dbReference>
<dbReference type="InterPro" id="IPR050059">
    <property type="entry name" value="ATP_synthase_B_chain"/>
</dbReference>
<dbReference type="NCBIfam" id="TIGR01144">
    <property type="entry name" value="ATP_synt_b"/>
    <property type="match status" value="1"/>
</dbReference>
<dbReference type="NCBIfam" id="NF004412">
    <property type="entry name" value="PRK05759.1-3"/>
    <property type="match status" value="1"/>
</dbReference>
<dbReference type="PANTHER" id="PTHR33445:SF1">
    <property type="entry name" value="ATP SYNTHASE SUBUNIT B"/>
    <property type="match status" value="1"/>
</dbReference>
<dbReference type="PANTHER" id="PTHR33445">
    <property type="entry name" value="ATP SYNTHASE SUBUNIT B', CHLOROPLASTIC"/>
    <property type="match status" value="1"/>
</dbReference>
<dbReference type="Pfam" id="PF00430">
    <property type="entry name" value="ATP-synt_B"/>
    <property type="match status" value="1"/>
</dbReference>
<dbReference type="SUPFAM" id="SSF81573">
    <property type="entry name" value="F1F0 ATP synthase subunit B, membrane domain"/>
    <property type="match status" value="1"/>
</dbReference>
<accession>Q83G87</accession>
<proteinExistence type="inferred from homology"/>
<protein>
    <recommendedName>
        <fullName evidence="1">ATP synthase subunit b</fullName>
    </recommendedName>
    <alternativeName>
        <fullName evidence="1">ATP synthase F(0) sector subunit b</fullName>
    </alternativeName>
    <alternativeName>
        <fullName evidence="1">ATPase subunit I</fullName>
    </alternativeName>
    <alternativeName>
        <fullName evidence="1">F-type ATPase subunit b</fullName>
        <shortName evidence="1">F-ATPase subunit b</shortName>
    </alternativeName>
</protein>
<evidence type="ECO:0000255" key="1">
    <source>
        <dbReference type="HAMAP-Rule" id="MF_01398"/>
    </source>
</evidence>
<gene>
    <name evidence="1" type="primary">atpF</name>
    <name type="ordered locus">TWT_428</name>
</gene>
<reference key="1">
    <citation type="journal article" date="2003" name="Genome Res.">
        <title>Tropheryma whipplei twist: a human pathogenic Actinobacteria with a reduced genome.</title>
        <authorList>
            <person name="Raoult D."/>
            <person name="Ogata H."/>
            <person name="Audic S."/>
            <person name="Robert C."/>
            <person name="Suhre K."/>
            <person name="Drancourt M."/>
            <person name="Claverie J.-M."/>
        </authorList>
    </citation>
    <scope>NUCLEOTIDE SEQUENCE [LARGE SCALE GENOMIC DNA]</scope>
    <source>
        <strain>Twist</strain>
    </source>
</reference>
<organism>
    <name type="scientific">Tropheryma whipplei (strain Twist)</name>
    <name type="common">Whipple's bacillus</name>
    <dbReference type="NCBI Taxonomy" id="203267"/>
    <lineage>
        <taxon>Bacteria</taxon>
        <taxon>Bacillati</taxon>
        <taxon>Actinomycetota</taxon>
        <taxon>Actinomycetes</taxon>
        <taxon>Micrococcales</taxon>
        <taxon>Tropherymataceae</taxon>
        <taxon>Tropheryma</taxon>
    </lineage>
</organism>
<name>ATPF_TROWT</name>
<sequence>MKFAQPHNPLLPSVPDIVFSAIVLAIVLPFFWWFVIPRISKLLSDRSSLIEGKISEAASAHARALETLELRKQQLDEAKSEASQIRQEARDDAQLILQQARETADETAERVMLHAREQIQAEKAAALLSLRSEIATLALAAAGKAVSEKLDDDKKSRELVSASIAKMAEDAG</sequence>
<feature type="chain" id="PRO_0000368850" description="ATP synthase subunit b">
    <location>
        <begin position="1"/>
        <end position="172"/>
    </location>
</feature>
<feature type="transmembrane region" description="Helical" evidence="1">
    <location>
        <begin position="17"/>
        <end position="37"/>
    </location>
</feature>